<geneLocation type="chloroplast"/>
<evidence type="ECO:0000255" key="1">
    <source>
        <dbReference type="HAMAP-Rule" id="MF_00433"/>
    </source>
</evidence>
<keyword id="KW-0150">Chloroplast</keyword>
<keyword id="KW-0249">Electron transport</keyword>
<keyword id="KW-0472">Membrane</keyword>
<keyword id="KW-0602">Photosynthesis</keyword>
<keyword id="KW-0934">Plastid</keyword>
<keyword id="KW-0793">Thylakoid</keyword>
<keyword id="KW-0812">Transmembrane</keyword>
<keyword id="KW-1133">Transmembrane helix</keyword>
<keyword id="KW-0813">Transport</keyword>
<proteinExistence type="inferred from homology"/>
<comment type="function">
    <text evidence="1">Component of the cytochrome b6-f complex, which mediates electron transfer between photosystem II (PSII) and photosystem I (PSI), cyclic electron flow around PSI, and state transitions. PetL is important for photoautotrophic growth as well as for electron transfer efficiency and stability of the cytochrome b6-f complex.</text>
</comment>
<comment type="subunit">
    <text evidence="1">The 4 large subunits of the cytochrome b6-f complex are cytochrome b6, subunit IV (17 kDa polypeptide, PetD), cytochrome f and the Rieske protein, while the 4 small subunits are PetG, PetL, PetM and PetN. The complex functions as a dimer.</text>
</comment>
<comment type="subcellular location">
    <subcellularLocation>
        <location evidence="1">Plastid</location>
        <location evidence="1">Chloroplast thylakoid membrane</location>
        <topology evidence="1">Single-pass membrane protein</topology>
    </subcellularLocation>
</comment>
<comment type="similarity">
    <text evidence="1">Belongs to the PetL family.</text>
</comment>
<dbReference type="EMBL" id="AB240139">
    <property type="protein sequence ID" value="BAE48021.1"/>
    <property type="molecule type" value="Genomic_DNA"/>
</dbReference>
<dbReference type="RefSeq" id="YP_398883.1">
    <property type="nucleotide sequence ID" value="NC_007602.1"/>
</dbReference>
<dbReference type="SMR" id="Q33C14"/>
<dbReference type="GeneID" id="3776360"/>
<dbReference type="KEGG" id="nto:3776360"/>
<dbReference type="OrthoDB" id="738066at2759"/>
<dbReference type="GO" id="GO:0009535">
    <property type="term" value="C:chloroplast thylakoid membrane"/>
    <property type="evidence" value="ECO:0007669"/>
    <property type="project" value="UniProtKB-SubCell"/>
</dbReference>
<dbReference type="GO" id="GO:0009512">
    <property type="term" value="C:cytochrome b6f complex"/>
    <property type="evidence" value="ECO:0007669"/>
    <property type="project" value="InterPro"/>
</dbReference>
<dbReference type="GO" id="GO:0045158">
    <property type="term" value="F:electron transporter, transferring electrons within cytochrome b6/f complex of photosystem II activity"/>
    <property type="evidence" value="ECO:0007669"/>
    <property type="project" value="UniProtKB-UniRule"/>
</dbReference>
<dbReference type="GO" id="GO:0015979">
    <property type="term" value="P:photosynthesis"/>
    <property type="evidence" value="ECO:0007669"/>
    <property type="project" value="UniProtKB-KW"/>
</dbReference>
<dbReference type="HAMAP" id="MF_00433">
    <property type="entry name" value="Cytb6_f_PetL"/>
    <property type="match status" value="1"/>
</dbReference>
<dbReference type="InterPro" id="IPR007802">
    <property type="entry name" value="Cyt_b6/f_cplx_su6"/>
</dbReference>
<dbReference type="PANTHER" id="PTHR37266">
    <property type="entry name" value="CYTOCHROME B6-F COMPLEX SUBUNIT 6"/>
    <property type="match status" value="1"/>
</dbReference>
<dbReference type="PANTHER" id="PTHR37266:SF1">
    <property type="entry name" value="CYTOCHROME B6-F COMPLEX SUBUNIT 6"/>
    <property type="match status" value="1"/>
</dbReference>
<dbReference type="Pfam" id="PF05115">
    <property type="entry name" value="PetL"/>
    <property type="match status" value="1"/>
</dbReference>
<dbReference type="SUPFAM" id="SSF103436">
    <property type="entry name" value="PetL subunit of the cytochrome b6f complex"/>
    <property type="match status" value="1"/>
</dbReference>
<gene>
    <name evidence="1" type="primary">petL</name>
</gene>
<feature type="chain" id="PRO_0000233680" description="Cytochrome b6-f complex subunit 6">
    <location>
        <begin position="1"/>
        <end position="31"/>
    </location>
</feature>
<feature type="transmembrane region" description="Helical" evidence="1">
    <location>
        <begin position="4"/>
        <end position="24"/>
    </location>
</feature>
<reference key="1">
    <citation type="journal article" date="2006" name="Mol. Genet. Genomics">
        <title>The chloroplast genome of Nicotiana sylvestris and Nicotiana tomentosiformis: complete sequencing confirms that the Nicotiana sylvestris progenitor is the maternal genome donor of Nicotiana tabacum.</title>
        <authorList>
            <person name="Yukawa M."/>
            <person name="Tsudzuki T."/>
            <person name="Sugiura M."/>
        </authorList>
    </citation>
    <scope>NUCLEOTIDE SEQUENCE [LARGE SCALE GENOMIC DNA]</scope>
</reference>
<sequence length="31" mass="3389">MLTITSYFGFLLAALTITSALFIGLSKIRLI</sequence>
<name>PETL_NICTO</name>
<accession>Q33C14</accession>
<protein>
    <recommendedName>
        <fullName evidence="1">Cytochrome b6-f complex subunit 6</fullName>
    </recommendedName>
    <alternativeName>
        <fullName evidence="1">Cytochrome b6-f complex subunit PetL</fullName>
    </alternativeName>
    <alternativeName>
        <fullName evidence="1">Cytochrome b6-f complex subunit VI</fullName>
    </alternativeName>
</protein>
<organism>
    <name type="scientific">Nicotiana tomentosiformis</name>
    <name type="common">Tobacco</name>
    <dbReference type="NCBI Taxonomy" id="4098"/>
    <lineage>
        <taxon>Eukaryota</taxon>
        <taxon>Viridiplantae</taxon>
        <taxon>Streptophyta</taxon>
        <taxon>Embryophyta</taxon>
        <taxon>Tracheophyta</taxon>
        <taxon>Spermatophyta</taxon>
        <taxon>Magnoliopsida</taxon>
        <taxon>eudicotyledons</taxon>
        <taxon>Gunneridae</taxon>
        <taxon>Pentapetalae</taxon>
        <taxon>asterids</taxon>
        <taxon>lamiids</taxon>
        <taxon>Solanales</taxon>
        <taxon>Solanaceae</taxon>
        <taxon>Nicotianoideae</taxon>
        <taxon>Nicotianeae</taxon>
        <taxon>Nicotiana</taxon>
    </lineage>
</organism>